<reference key="1">
    <citation type="submission" date="2005-09" db="EMBL/GenBank/DDBJ databases">
        <authorList>
            <consortium name="NIH - Mammalian Gene Collection (MGC) project"/>
        </authorList>
    </citation>
    <scope>NUCLEOTIDE SEQUENCE [LARGE SCALE MRNA]</scope>
    <source>
        <strain>Hereford</strain>
        <tissue>Fetal liver</tissue>
    </source>
</reference>
<reference key="2">
    <citation type="journal article" date="1972" name="Eur. J. Biochem.">
        <title>Structural characterization of N-terminal antigenic determinants in calf and human collagen.</title>
        <authorList>
            <person name="Rauterberg J."/>
            <person name="Timpl R."/>
            <person name="Furthmayr H."/>
        </authorList>
    </citation>
    <scope>PROTEIN SEQUENCE OF 162-180</scope>
    <scope>ALLYSINE AT LYS-170</scope>
    <scope>PYROGLUTAMATE FORMATION AT GLN-162</scope>
</reference>
<reference key="3">
    <citation type="journal article" date="1975" name="Eur. J. Biochem.">
        <title>The covalent structure of collagen: amino-acid sequence of the cyanogen-bromide peptides alpha-1-CB2, alpha-1-CB4 and alpha-1-CB5 from calf-skin collagen.</title>
        <authorList>
            <person name="Fietzek P.P."/>
            <person name="Kuehn K."/>
        </authorList>
    </citation>
    <scope>PROTEIN SEQUENCE OF 181-306</scope>
    <scope>HYDROXYLATION AT LYS-264</scope>
</reference>
<reference key="4">
    <citation type="journal article" date="1972" name="FEBS Lett.">
        <title>The covalent structure of collagen: amino acid sequence of alpha-1-CB3 from calf skin collagen.</title>
        <authorList>
            <person name="Fietzek P.P."/>
            <person name="Wendt P."/>
            <person name="Kell I."/>
            <person name="Kuehn K."/>
        </authorList>
    </citation>
    <scope>PROTEIN SEQUENCE OF 580-728</scope>
</reference>
<reference key="5">
    <citation type="journal article" date="1973" name="Eur. J. Biochem.">
        <title>The covalent structure of collagen. 2. The amino-acid sequence of alpha-1-CB7 from calf-skin collagen.</title>
        <authorList>
            <person name="Fietzek P.P."/>
            <person name="Rexrodt F.W."/>
            <person name="Hopper K.E."/>
            <person name="Kuehn K."/>
        </authorList>
    </citation>
    <scope>PROTEIN SEQUENCE OF 729-999</scope>
</reference>
<reference key="6">
    <citation type="journal article" date="1972" name="Eur. J. Biochem.">
        <title>The covalent structure of collagen. The amino-acid sequence of the 112-residues. Amino-terminal part of peptide alpha-1-CB6 from calf-skin collagen.</title>
        <authorList>
            <person name="Wendt P."/>
            <person name="Mark K.V.D."/>
            <person name="Rexrodt F."/>
            <person name="Kuehn K."/>
        </authorList>
    </citation>
    <scope>PROTEIN SEQUENCE OF 1000-1112</scope>
</reference>
<reference key="7">
    <citation type="journal article" date="1972" name="Eur. J. Biochem.">
        <title>The covalent structure of collagen. Amino-acid sequence of peptide alpha-1-CB6-C2.</title>
        <authorList>
            <person name="Fietzek P.P."/>
            <person name="Rexrodt F.W."/>
            <person name="Wendt P."/>
            <person name="Stark M."/>
            <person name="Kuehn K."/>
        </authorList>
    </citation>
    <scope>PROTEIN SEQUENCE OF 1113-1188</scope>
</reference>
<reference key="8">
    <citation type="journal article" date="1972" name="FEBS Lett.">
        <title>The amino acid sequence of the carboxyterminal nonhelical cross link region of the alpha 1 chain of calf skin collagen.</title>
        <authorList>
            <person name="Rauterberg J."/>
            <person name="Fietzek P."/>
            <person name="Rexrodt F."/>
            <person name="Becker U."/>
            <person name="Stark M."/>
            <person name="Kuehn K."/>
        </authorList>
    </citation>
    <scope>PROTEIN SEQUENCE OF 1196-1215</scope>
    <scope>ALLYSINE AT LYS-1207</scope>
    <scope>HYDROXYLATION AT PRO-1163</scope>
</reference>
<reference key="9">
    <citation type="journal article" date="2015" name="J. Biol. Chem.">
        <title>Post-translationally abnormal collagens of prolyl 3-hydroxylase-2 null mice offer a pathobiological mechanism for the high myopia linked to human LEPREL1 mutations.</title>
        <authorList>
            <person name="Hudson D.M."/>
            <person name="Joeng K.S."/>
            <person name="Werther R."/>
            <person name="Rajagopal A."/>
            <person name="Weis M."/>
            <person name="Lee B.H."/>
            <person name="Eyre D.R."/>
        </authorList>
    </citation>
    <scope>HYDROXYLATION AT PRO-1178; PRO-1179; PRO-1181; PRO-1182; PRO-1185 AND PRO-1188</scope>
    <scope>IDENTIFICATION BY MASS SPECTROMETRY</scope>
</reference>
<reference key="10">
    <citation type="journal article" date="2016" name="J. Biol. Chem.">
        <title>Characterization of microfibrillar-associated protein 4 (MFAP4) as a tropoelastin- and fibrillin-binding protein involved in elastic fiber formation.</title>
        <authorList>
            <person name="Pilecki B."/>
            <person name="Holm A.T."/>
            <person name="Schlosser A."/>
            <person name="Moeller J.B."/>
            <person name="Wohl A.P."/>
            <person name="Zuk A.V."/>
            <person name="Heumueller S.E."/>
            <person name="Wallis R."/>
            <person name="Moestrup S.K."/>
            <person name="Sengle G."/>
            <person name="Holmskov U."/>
            <person name="Sorensen G.L."/>
        </authorList>
    </citation>
    <scope>INTERACTION WITH MFAP4</scope>
</reference>
<proteinExistence type="evidence at protein level"/>
<gene>
    <name type="primary">COL1A1</name>
</gene>
<comment type="function">
    <text>Type I collagen is a member of group I collagen (fibrillar forming collagen).</text>
</comment>
<comment type="subunit">
    <text evidence="2 3 13">Trimers of one alpha 2(I) and two alpha 1(I) chains. Interacts with MRC2 (By similarity). Interacts with TRAM2 (By similarity). Interacts with MFAP4 in a Ca (2+)-dependent manner (PubMed:26601954).</text>
</comment>
<comment type="subcellular location">
    <subcellularLocation>
        <location evidence="8">Secreted</location>
        <location evidence="8">Extracellular space</location>
        <location evidence="8">Extracellular matrix</location>
    </subcellularLocation>
</comment>
<comment type="tissue specificity">
    <text>Forms the fibrils of tendon, ligaments and bones. In bones the fibrils are mineralized with calcium hydroxyapatite.</text>
</comment>
<comment type="domain">
    <text evidence="1">The C-terminal propeptide, also known as COLFI domain, have crucial roles in tissue growth and repair by controlling both the intracellular assembly of procollagen molecules and the extracellular assembly of collagen fibrils. It binds a calcium ion which is essential for its function (By similarity).</text>
</comment>
<comment type="PTM">
    <text evidence="10 11">Contains mostly 4-hydroxyproline. Proline residues at the third position of the tripeptide repeating unit (G-X-Y) are hydroxylated in some or all of the chains.</text>
</comment>
<comment type="PTM">
    <text evidence="11">Contains 3-hydroxyproline at a few sites. This modification occurs on the first proline residue in the sequence motif Gly-Pro-Hyp, where Hyp is 4-hydroxyproline.</text>
</comment>
<comment type="PTM">
    <text evidence="4">Lysine residues at the third position of the tripeptide repeating unit (G-X-Y) are 5-hydroxylated in some or all of the chains.</text>
</comment>
<comment type="PTM">
    <text evidence="5">O-glycosylated on hydroxylated lysine residues. The O-linked glycan consists of a Glc-Gal disaccharide.</text>
</comment>
<comment type="similarity">
    <text evidence="8">Belongs to the fibrillar collagen family.</text>
</comment>
<name>CO1A1_BOVIN</name>
<organism>
    <name type="scientific">Bos taurus</name>
    <name type="common">Bovine</name>
    <dbReference type="NCBI Taxonomy" id="9913"/>
    <lineage>
        <taxon>Eukaryota</taxon>
        <taxon>Metazoa</taxon>
        <taxon>Chordata</taxon>
        <taxon>Craniata</taxon>
        <taxon>Vertebrata</taxon>
        <taxon>Euteleostomi</taxon>
        <taxon>Mammalia</taxon>
        <taxon>Eutheria</taxon>
        <taxon>Laurasiatheria</taxon>
        <taxon>Artiodactyla</taxon>
        <taxon>Ruminantia</taxon>
        <taxon>Pecora</taxon>
        <taxon>Bovidae</taxon>
        <taxon>Bovinae</taxon>
        <taxon>Bos</taxon>
    </lineage>
</organism>
<protein>
    <recommendedName>
        <fullName>Collagen alpha-1(I) chain</fullName>
    </recommendedName>
    <alternativeName>
        <fullName>Alpha-1 type I collagen</fullName>
    </alternativeName>
</protein>
<keyword id="KW-0106">Calcium</keyword>
<keyword id="KW-0176">Collagen</keyword>
<keyword id="KW-0903">Direct protein sequencing</keyword>
<keyword id="KW-1015">Disulfide bond</keyword>
<keyword id="KW-0272">Extracellular matrix</keyword>
<keyword id="KW-0325">Glycoprotein</keyword>
<keyword id="KW-0379">Hydroxylation</keyword>
<keyword id="KW-0479">Metal-binding</keyword>
<keyword id="KW-0597">Phosphoprotein</keyword>
<keyword id="KW-0873">Pyrrolidone carboxylic acid</keyword>
<keyword id="KW-1185">Reference proteome</keyword>
<keyword id="KW-0677">Repeat</keyword>
<keyword id="KW-0964">Secreted</keyword>
<keyword id="KW-0732">Signal</keyword>
<sequence length="1463" mass="138938">MFSFVDLRLLLLLAATALLTHGQEEGQEEGQEEDIPPVTCVQNGLRYHDRDVWKPVPCQICVCDNGNVLCDDVICDELKDCPNAKVPTDECCPVCPEGQESPTDQETTGVEGPKGDTGPRGPRGPAGPPGRDGIPGQPGLPGPPGPPGPPGPPGLGGNFAPQLSYGYDEKSTGISVPGPMGPSGPRGLPGPPGAPGPQGFQGPPGEPGEPGASGPMGPRGPPGPPGKNGDDGEAGKPGRPGERGPPGPQGARGLPGTAGLPGMKGHRGFSGLDGAKGDAGPAGPKGEPGSPGENGAPGQMGPRGLPGERGRPGAPGPAGARGNDGATGAAGPPGPTGPAGPPGFPGAVGAKGEGGPQGPRGSEGPQGVRGEPGPPGPAGAAGPAGNPGADGQPGAKGANGAPGIAGAPGFPGARGPSGPQGPSGPPGPKGNSGEPGAPGSKGDTGAKGEPGPTGIQGPPGPAGEEGKRGARGEPGPAGLPGPPGERGGPGSRGFPGADGVAGPKGPAGERGAPGPAGPKGSPGEAGRPGEAGLPGAKGLTGSPGSPGPDGKTGPPGPAGQDGRPGPPGPPGARGQAGVMGFPGPKGAAGEPGKAGERGVPGPPGAVGPAGKDGEAGAQGPPGPAGPAGERGEQGPAGSPGFQGLPGPAGPPGEAGKPGEQGVPGDLGAPGPSGARGERGFPGERGVQGPPGPAGPRGANGAPGNDGAKGDAGAPGAPGSQGAPGLQGMPGERGAAGLPGPKGDRGDAGPKGADGAPGKDGVRGLTGPIGPPGPAGAPGDKGEAGPSGPAGPTGARGAPGDRGEPGPPGPAGFAGPPGADGQPGAKGEPGDAGAKGDAGPPGPAGPAGPPGPIGNVGAPGPKGARGSAGPPGATGFPGAAGRVGPPGPSGNAGPPGPPGPAGKEGSKGPRGETGPAGRPGEVGPPGPPGPAGEKGAPGADGPAGAPGTPGPQGIAGQRGVVGLPGQRGERGFPGLPGPSGEPGKQGPSGASGERGPPGPMGPPGLAGPPGESGREGAPGAEGSPGRDGSPGAKGDRGETGPAGPPGAPGAPGAPGPVGPAGKSGDRGETGPAGPAGPIGPVGARGPAGPQGPRGDKGETGEQGDRGIKGHRGFSGLQGPPGPPGSPGEQGPSGASGPAGPRGPPGSAGSPGKDGLNGLPGPIGPPGPRGRTGDAGPAGPPGPPGPPGPPGPPSGGYDLSFLPQPPQEKAHDGGRYYRADDANVVRDRDLEVDTTLKSLSQQIENIRSPEGSRKNPARTCRDLKMCHSDWKSGEYWIDPNQGCNLDAIKVFCNMETGETCVYPTQPSVAQKNWYISKNPKEKRHVWYGESMTGGFQFEYGGQGSDPADVAIQLTFLRLMSTEASQNITYHCKNSVAYMDQQTGNLKKALLLQGSNEIEIRAEGNSRFTYSVTYDGCTSHTGAWGKTVIEYKTTKTSRLPIIDVAPLDVGAPDQEFGFDVGPACFL</sequence>
<dbReference type="EMBL" id="BC105184">
    <property type="protein sequence ID" value="AAI05185.1"/>
    <property type="molecule type" value="mRNA"/>
</dbReference>
<dbReference type="PIR" id="A91193">
    <property type="entry name" value="CGBO1S"/>
</dbReference>
<dbReference type="RefSeq" id="NP_001029211.1">
    <property type="nucleotide sequence ID" value="NM_001034039.2"/>
</dbReference>
<dbReference type="BMRB" id="P02453"/>
<dbReference type="SMR" id="P02453"/>
<dbReference type="ComplexPortal" id="CPX-3101">
    <property type="entry name" value="Collagen type I trimer"/>
</dbReference>
<dbReference type="FunCoup" id="P02453">
    <property type="interactions" value="589"/>
</dbReference>
<dbReference type="IntAct" id="P02453">
    <property type="interactions" value="1"/>
</dbReference>
<dbReference type="STRING" id="9913.ENSBTAP00000017420"/>
<dbReference type="GlyCosmos" id="P02453">
    <property type="glycosylation" value="2 sites, No reported glycans"/>
</dbReference>
<dbReference type="GlyGen" id="P02453">
    <property type="glycosylation" value="2 sites"/>
</dbReference>
<dbReference type="PaxDb" id="9913-ENSBTAP00000017420"/>
<dbReference type="PeptideAtlas" id="P02453"/>
<dbReference type="Ensembl" id="ENSBTAT00000017420.5">
    <property type="protein sequence ID" value="ENSBTAP00000017420.3"/>
    <property type="gene ID" value="ENSBTAG00000013103.7"/>
</dbReference>
<dbReference type="GeneID" id="282187"/>
<dbReference type="KEGG" id="bta:282187"/>
<dbReference type="CTD" id="1277"/>
<dbReference type="VEuPathDB" id="HostDB:ENSBTAG00000013103"/>
<dbReference type="VGNC" id="VGNC:27560">
    <property type="gene designation" value="COL1A1"/>
</dbReference>
<dbReference type="eggNOG" id="KOG3544">
    <property type="taxonomic scope" value="Eukaryota"/>
</dbReference>
<dbReference type="GeneTree" id="ENSGT00940000156584"/>
<dbReference type="HOGENOM" id="CLU_001074_2_3_1"/>
<dbReference type="InParanoid" id="P02453"/>
<dbReference type="OMA" id="YYDRDVW"/>
<dbReference type="OrthoDB" id="8939548at2759"/>
<dbReference type="TreeFam" id="TF344135"/>
<dbReference type="Reactome" id="R-BTA-114604">
    <property type="pathway name" value="GPVI-mediated activation cascade"/>
</dbReference>
<dbReference type="Reactome" id="R-BTA-1442490">
    <property type="pathway name" value="Collagen degradation"/>
</dbReference>
<dbReference type="Reactome" id="R-BTA-1474244">
    <property type="pathway name" value="Extracellular matrix organization"/>
</dbReference>
<dbReference type="Reactome" id="R-BTA-1650814">
    <property type="pathway name" value="Collagen biosynthesis and modifying enzymes"/>
</dbReference>
<dbReference type="Reactome" id="R-BTA-198933">
    <property type="pathway name" value="Immunoregulatory interactions between a Lymphoid and a non-Lymphoid cell"/>
</dbReference>
<dbReference type="Reactome" id="R-BTA-2022090">
    <property type="pathway name" value="Assembly of collagen fibrils and other multimeric structures"/>
</dbReference>
<dbReference type="Reactome" id="R-BTA-202733">
    <property type="pathway name" value="Cell surface interactions at the vascular wall"/>
</dbReference>
<dbReference type="Reactome" id="R-BTA-216083">
    <property type="pathway name" value="Integrin cell surface interactions"/>
</dbReference>
<dbReference type="Reactome" id="R-BTA-2243919">
    <property type="pathway name" value="Crosslinking of collagen fibrils"/>
</dbReference>
<dbReference type="Reactome" id="R-BTA-3000171">
    <property type="pathway name" value="Non-integrin membrane-ECM interactions"/>
</dbReference>
<dbReference type="Reactome" id="R-BTA-3000178">
    <property type="pathway name" value="ECM proteoglycans"/>
</dbReference>
<dbReference type="Reactome" id="R-BTA-430116">
    <property type="pathway name" value="GP1b-IX-V activation signalling"/>
</dbReference>
<dbReference type="Reactome" id="R-BTA-75892">
    <property type="pathway name" value="Platelet Adhesion to exposed collagen"/>
</dbReference>
<dbReference type="Reactome" id="R-BTA-76009">
    <property type="pathway name" value="Platelet Aggregation (Plug Formation)"/>
</dbReference>
<dbReference type="Reactome" id="R-BTA-8874081">
    <property type="pathway name" value="MET activates PTK2 signaling"/>
</dbReference>
<dbReference type="Reactome" id="R-BTA-8948216">
    <property type="pathway name" value="Collagen chain trimerization"/>
</dbReference>
<dbReference type="Proteomes" id="UP000009136">
    <property type="component" value="Chromosome 19"/>
</dbReference>
<dbReference type="Bgee" id="ENSBTAG00000013103">
    <property type="expression patterns" value="Expressed in uterine cervix and 103 other cell types or tissues"/>
</dbReference>
<dbReference type="GO" id="GO:0005584">
    <property type="term" value="C:collagen type I trimer"/>
    <property type="evidence" value="ECO:0000318"/>
    <property type="project" value="GO_Central"/>
</dbReference>
<dbReference type="GO" id="GO:0062023">
    <property type="term" value="C:collagen-containing extracellular matrix"/>
    <property type="evidence" value="ECO:0000318"/>
    <property type="project" value="GO_Central"/>
</dbReference>
<dbReference type="GO" id="GO:0005737">
    <property type="term" value="C:cytoplasm"/>
    <property type="evidence" value="ECO:0000318"/>
    <property type="project" value="GO_Central"/>
</dbReference>
<dbReference type="GO" id="GO:0005615">
    <property type="term" value="C:extracellular space"/>
    <property type="evidence" value="ECO:0000318"/>
    <property type="project" value="GO_Central"/>
</dbReference>
<dbReference type="GO" id="GO:0030020">
    <property type="term" value="F:extracellular matrix structural constituent conferring tensile strength"/>
    <property type="evidence" value="ECO:0000318"/>
    <property type="project" value="GO_Central"/>
</dbReference>
<dbReference type="GO" id="GO:0042802">
    <property type="term" value="F:identical protein binding"/>
    <property type="evidence" value="ECO:0007669"/>
    <property type="project" value="Ensembl"/>
</dbReference>
<dbReference type="GO" id="GO:0046872">
    <property type="term" value="F:metal ion binding"/>
    <property type="evidence" value="ECO:0007669"/>
    <property type="project" value="UniProtKB-KW"/>
</dbReference>
<dbReference type="GO" id="GO:0048407">
    <property type="term" value="F:platelet-derived growth factor binding"/>
    <property type="evidence" value="ECO:0007669"/>
    <property type="project" value="Ensembl"/>
</dbReference>
<dbReference type="GO" id="GO:0002020">
    <property type="term" value="F:protease binding"/>
    <property type="evidence" value="ECO:0007669"/>
    <property type="project" value="Ensembl"/>
</dbReference>
<dbReference type="GO" id="GO:0001568">
    <property type="term" value="P:blood vessel development"/>
    <property type="evidence" value="ECO:0000318"/>
    <property type="project" value="GO_Central"/>
</dbReference>
<dbReference type="GO" id="GO:0060346">
    <property type="term" value="P:bone trabecula formation"/>
    <property type="evidence" value="ECO:0007669"/>
    <property type="project" value="Ensembl"/>
</dbReference>
<dbReference type="GO" id="GO:0060351">
    <property type="term" value="P:cartilage development involved in endochondral bone morphogenesis"/>
    <property type="evidence" value="ECO:0007669"/>
    <property type="project" value="Ensembl"/>
</dbReference>
<dbReference type="GO" id="GO:0071230">
    <property type="term" value="P:cellular response to amino acid stimulus"/>
    <property type="evidence" value="ECO:0007669"/>
    <property type="project" value="Ensembl"/>
</dbReference>
<dbReference type="GO" id="GO:0071260">
    <property type="term" value="P:cellular response to mechanical stimulus"/>
    <property type="evidence" value="ECO:0007669"/>
    <property type="project" value="Ensembl"/>
</dbReference>
<dbReference type="GO" id="GO:0032964">
    <property type="term" value="P:collagen biosynthetic process"/>
    <property type="evidence" value="ECO:0007669"/>
    <property type="project" value="Ensembl"/>
</dbReference>
<dbReference type="GO" id="GO:0030199">
    <property type="term" value="P:collagen fibril organization"/>
    <property type="evidence" value="ECO:0007669"/>
    <property type="project" value="Ensembl"/>
</dbReference>
<dbReference type="GO" id="GO:0048706">
    <property type="term" value="P:embryonic skeletal system development"/>
    <property type="evidence" value="ECO:0007669"/>
    <property type="project" value="Ensembl"/>
</dbReference>
<dbReference type="GO" id="GO:0001958">
    <property type="term" value="P:endochondral ossification"/>
    <property type="evidence" value="ECO:0007669"/>
    <property type="project" value="Ensembl"/>
</dbReference>
<dbReference type="GO" id="GO:0060325">
    <property type="term" value="P:face morphogenesis"/>
    <property type="evidence" value="ECO:0007669"/>
    <property type="project" value="Ensembl"/>
</dbReference>
<dbReference type="GO" id="GO:0001957">
    <property type="term" value="P:intramembranous ossification"/>
    <property type="evidence" value="ECO:0007669"/>
    <property type="project" value="Ensembl"/>
</dbReference>
<dbReference type="GO" id="GO:0010812">
    <property type="term" value="P:negative regulation of cell-substrate adhesion"/>
    <property type="evidence" value="ECO:0007669"/>
    <property type="project" value="Ensembl"/>
</dbReference>
<dbReference type="GO" id="GO:0001503">
    <property type="term" value="P:ossification"/>
    <property type="evidence" value="ECO:0000318"/>
    <property type="project" value="GO_Central"/>
</dbReference>
<dbReference type="GO" id="GO:0001649">
    <property type="term" value="P:osteoblast differentiation"/>
    <property type="evidence" value="ECO:0007669"/>
    <property type="project" value="Ensembl"/>
</dbReference>
<dbReference type="GO" id="GO:0090263">
    <property type="term" value="P:positive regulation of canonical Wnt signaling pathway"/>
    <property type="evidence" value="ECO:0007669"/>
    <property type="project" value="Ensembl"/>
</dbReference>
<dbReference type="GO" id="GO:0030335">
    <property type="term" value="P:positive regulation of cell migration"/>
    <property type="evidence" value="ECO:0007669"/>
    <property type="project" value="Ensembl"/>
</dbReference>
<dbReference type="GO" id="GO:0045893">
    <property type="term" value="P:positive regulation of DNA-templated transcription"/>
    <property type="evidence" value="ECO:0007669"/>
    <property type="project" value="Ensembl"/>
</dbReference>
<dbReference type="GO" id="GO:0010718">
    <property type="term" value="P:positive regulation of epithelial to mesenchymal transition"/>
    <property type="evidence" value="ECO:0007669"/>
    <property type="project" value="Ensembl"/>
</dbReference>
<dbReference type="GO" id="GO:0034504">
    <property type="term" value="P:protein localization to nucleus"/>
    <property type="evidence" value="ECO:0007669"/>
    <property type="project" value="Ensembl"/>
</dbReference>
<dbReference type="GO" id="GO:0015031">
    <property type="term" value="P:protein transport"/>
    <property type="evidence" value="ECO:0007669"/>
    <property type="project" value="Ensembl"/>
</dbReference>
<dbReference type="GO" id="GO:0009612">
    <property type="term" value="P:response to mechanical stimulus"/>
    <property type="evidence" value="ECO:0000318"/>
    <property type="project" value="GO_Central"/>
</dbReference>
<dbReference type="GO" id="GO:0007605">
    <property type="term" value="P:sensory perception of sound"/>
    <property type="evidence" value="ECO:0007669"/>
    <property type="project" value="Ensembl"/>
</dbReference>
<dbReference type="GO" id="GO:0001501">
    <property type="term" value="P:skeletal system development"/>
    <property type="evidence" value="ECO:0000318"/>
    <property type="project" value="GO_Central"/>
</dbReference>
<dbReference type="GO" id="GO:0043588">
    <property type="term" value="P:skin development"/>
    <property type="evidence" value="ECO:0000318"/>
    <property type="project" value="GO_Central"/>
</dbReference>
<dbReference type="GO" id="GO:0043589">
    <property type="term" value="P:skin morphogenesis"/>
    <property type="evidence" value="ECO:0007669"/>
    <property type="project" value="Ensembl"/>
</dbReference>
<dbReference type="GO" id="GO:0034505">
    <property type="term" value="P:tooth mineralization"/>
    <property type="evidence" value="ECO:0007669"/>
    <property type="project" value="Ensembl"/>
</dbReference>
<dbReference type="GO" id="GO:0007601">
    <property type="term" value="P:visual perception"/>
    <property type="evidence" value="ECO:0007669"/>
    <property type="project" value="Ensembl"/>
</dbReference>
<dbReference type="FunFam" id="2.60.120.1000:FF:000001">
    <property type="entry name" value="Collagen alpha-1 type I chain"/>
    <property type="match status" value="1"/>
</dbReference>
<dbReference type="FunFam" id="2.10.70.10:FF:000013">
    <property type="entry name" value="Collagen, type I, alpha 1"/>
    <property type="match status" value="1"/>
</dbReference>
<dbReference type="Gene3D" id="2.60.120.1000">
    <property type="match status" value="1"/>
</dbReference>
<dbReference type="Gene3D" id="2.10.70.10">
    <property type="entry name" value="Complement Module, domain 1"/>
    <property type="match status" value="1"/>
</dbReference>
<dbReference type="InterPro" id="IPR008160">
    <property type="entry name" value="Collagen"/>
</dbReference>
<dbReference type="InterPro" id="IPR050149">
    <property type="entry name" value="Collagen_superfamily"/>
</dbReference>
<dbReference type="InterPro" id="IPR000885">
    <property type="entry name" value="Fib_collagen_C"/>
</dbReference>
<dbReference type="InterPro" id="IPR001007">
    <property type="entry name" value="VWF_dom"/>
</dbReference>
<dbReference type="PANTHER" id="PTHR24023">
    <property type="entry name" value="COLLAGEN ALPHA"/>
    <property type="match status" value="1"/>
</dbReference>
<dbReference type="PANTHER" id="PTHR24023:SF1082">
    <property type="entry name" value="COLLAGEN TRIPLE HELIX REPEAT"/>
    <property type="match status" value="1"/>
</dbReference>
<dbReference type="Pfam" id="PF01410">
    <property type="entry name" value="COLFI"/>
    <property type="match status" value="1"/>
</dbReference>
<dbReference type="Pfam" id="PF01391">
    <property type="entry name" value="Collagen"/>
    <property type="match status" value="12"/>
</dbReference>
<dbReference type="Pfam" id="PF00093">
    <property type="entry name" value="VWC"/>
    <property type="match status" value="1"/>
</dbReference>
<dbReference type="SMART" id="SM00038">
    <property type="entry name" value="COLFI"/>
    <property type="match status" value="1"/>
</dbReference>
<dbReference type="SMART" id="SM00214">
    <property type="entry name" value="VWC"/>
    <property type="match status" value="1"/>
</dbReference>
<dbReference type="SUPFAM" id="SSF57603">
    <property type="entry name" value="FnI-like domain"/>
    <property type="match status" value="1"/>
</dbReference>
<dbReference type="PROSITE" id="PS51461">
    <property type="entry name" value="NC1_FIB"/>
    <property type="match status" value="1"/>
</dbReference>
<dbReference type="PROSITE" id="PS01208">
    <property type="entry name" value="VWFC_1"/>
    <property type="match status" value="1"/>
</dbReference>
<dbReference type="PROSITE" id="PS50184">
    <property type="entry name" value="VWFC_2"/>
    <property type="match status" value="1"/>
</dbReference>
<accession>P02453</accession>
<accession>Q3MHM2</accession>
<feature type="signal peptide" evidence="6">
    <location>
        <begin position="1"/>
        <end position="22"/>
    </location>
</feature>
<feature type="propeptide" id="PRO_0000236804" description="N-terminal propeptide" evidence="14">
    <location>
        <begin position="23"/>
        <end position="161"/>
    </location>
</feature>
<feature type="chain" id="PRO_0000059396" description="Collagen alpha-1(I) chain" evidence="16">
    <location>
        <begin position="162"/>
        <end position="1217"/>
    </location>
</feature>
<feature type="propeptide" id="PRO_0000236805" description="C-terminal propeptide" evidence="16">
    <location>
        <begin position="1218"/>
        <end position="1463"/>
    </location>
</feature>
<feature type="domain" description="VWFC" evidence="7">
    <location>
        <begin position="38"/>
        <end position="96"/>
    </location>
</feature>
<feature type="domain" description="Fibrillar collagen NC1" evidence="8">
    <location>
        <begin position="1228"/>
        <end position="1463"/>
    </location>
</feature>
<feature type="region of interest" description="Disordered" evidence="9">
    <location>
        <begin position="98"/>
        <end position="1217"/>
    </location>
</feature>
<feature type="region of interest" description="Nonhelical region (N-terminal)">
    <location>
        <begin position="162"/>
        <end position="177"/>
    </location>
</feature>
<feature type="region of interest" description="Triple-helical region">
    <location>
        <begin position="178"/>
        <end position="1191"/>
    </location>
</feature>
<feature type="region of interest" description="Nonhelical region (C-terminal)">
    <location>
        <begin position="1192"/>
        <end position="1215"/>
    </location>
</feature>
<feature type="short sequence motif" description="Cell attachment site" evidence="6">
    <location>
        <begin position="744"/>
        <end position="746"/>
    </location>
</feature>
<feature type="short sequence motif" description="Cell attachment site" evidence="6">
    <location>
        <begin position="1092"/>
        <end position="1094"/>
    </location>
</feature>
<feature type="compositionally biased region" description="Pro residues" evidence="9">
    <location>
        <begin position="138"/>
        <end position="153"/>
    </location>
</feature>
<feature type="compositionally biased region" description="Low complexity" evidence="9">
    <location>
        <begin position="197"/>
        <end position="216"/>
    </location>
</feature>
<feature type="compositionally biased region" description="Basic and acidic residues" evidence="9">
    <location>
        <begin position="228"/>
        <end position="242"/>
    </location>
</feature>
<feature type="compositionally biased region" description="Low complexity" evidence="9">
    <location>
        <begin position="278"/>
        <end position="294"/>
    </location>
</feature>
<feature type="compositionally biased region" description="Low complexity" evidence="9">
    <location>
        <begin position="317"/>
        <end position="330"/>
    </location>
</feature>
<feature type="compositionally biased region" description="Pro residues" evidence="9">
    <location>
        <begin position="332"/>
        <end position="344"/>
    </location>
</feature>
<feature type="compositionally biased region" description="Gly residues" evidence="9">
    <location>
        <begin position="349"/>
        <end position="358"/>
    </location>
</feature>
<feature type="compositionally biased region" description="Low complexity" evidence="9">
    <location>
        <begin position="378"/>
        <end position="417"/>
    </location>
</feature>
<feature type="compositionally biased region" description="Gly residues" evidence="9">
    <location>
        <begin position="484"/>
        <end position="493"/>
    </location>
</feature>
<feature type="compositionally biased region" description="Low complexity" evidence="9">
    <location>
        <begin position="494"/>
        <end position="525"/>
    </location>
</feature>
<feature type="compositionally biased region" description="Low complexity" evidence="9">
    <location>
        <begin position="537"/>
        <end position="563"/>
    </location>
</feature>
<feature type="compositionally biased region" description="Low complexity" evidence="9">
    <location>
        <begin position="572"/>
        <end position="591"/>
    </location>
</feature>
<feature type="compositionally biased region" description="Low complexity" evidence="9">
    <location>
        <begin position="633"/>
        <end position="660"/>
    </location>
</feature>
<feature type="compositionally biased region" description="Low complexity" evidence="9">
    <location>
        <begin position="695"/>
        <end position="723"/>
    </location>
</feature>
<feature type="compositionally biased region" description="Low complexity" evidence="9">
    <location>
        <begin position="783"/>
        <end position="797"/>
    </location>
</feature>
<feature type="compositionally biased region" description="Low complexity" evidence="9">
    <location>
        <begin position="810"/>
        <end position="837"/>
    </location>
</feature>
<feature type="compositionally biased region" description="Pro residues" evidence="9">
    <location>
        <begin position="839"/>
        <end position="851"/>
    </location>
</feature>
<feature type="compositionally biased region" description="Low complexity" evidence="9">
    <location>
        <begin position="852"/>
        <end position="882"/>
    </location>
</feature>
<feature type="compositionally biased region" description="Low complexity" evidence="9">
    <location>
        <begin position="930"/>
        <end position="954"/>
    </location>
</feature>
<feature type="compositionally biased region" description="Pro residues" evidence="9">
    <location>
        <begin position="995"/>
        <end position="1005"/>
    </location>
</feature>
<feature type="compositionally biased region" description="Pro residues" evidence="9">
    <location>
        <begin position="1041"/>
        <end position="1056"/>
    </location>
</feature>
<feature type="compositionally biased region" description="Low complexity" evidence="9">
    <location>
        <begin position="1077"/>
        <end position="1091"/>
    </location>
</feature>
<feature type="compositionally biased region" description="Basic and acidic residues" evidence="9">
    <location>
        <begin position="1092"/>
        <end position="1106"/>
    </location>
</feature>
<feature type="compositionally biased region" description="Low complexity" evidence="9">
    <location>
        <begin position="1125"/>
        <end position="1149"/>
    </location>
</feature>
<feature type="compositionally biased region" description="Pro residues" evidence="9">
    <location>
        <begin position="1176"/>
        <end position="1191"/>
    </location>
</feature>
<feature type="compositionally biased region" description="Basic and acidic residues" evidence="9">
    <location>
        <begin position="1206"/>
        <end position="1217"/>
    </location>
</feature>
<feature type="binding site" evidence="1">
    <location>
        <position position="1276"/>
    </location>
    <ligand>
        <name>Ca(2+)</name>
        <dbReference type="ChEBI" id="CHEBI:29108"/>
    </ligand>
</feature>
<feature type="binding site" evidence="1">
    <location>
        <position position="1278"/>
    </location>
    <ligand>
        <name>Ca(2+)</name>
        <dbReference type="ChEBI" id="CHEBI:29108"/>
    </ligand>
</feature>
<feature type="binding site" evidence="1">
    <location>
        <position position="1279"/>
    </location>
    <ligand>
        <name>Ca(2+)</name>
        <dbReference type="ChEBI" id="CHEBI:29108"/>
    </ligand>
</feature>
<feature type="binding site" evidence="1">
    <location>
        <position position="1281"/>
    </location>
    <ligand>
        <name>Ca(2+)</name>
        <dbReference type="ChEBI" id="CHEBI:29108"/>
    </ligand>
</feature>
<feature type="binding site" evidence="1">
    <location>
        <position position="1284"/>
    </location>
    <ligand>
        <name>Ca(2+)</name>
        <dbReference type="ChEBI" id="CHEBI:29108"/>
    </ligand>
</feature>
<feature type="modified residue" description="Pyrrolidone carboxylic acid" evidence="14">
    <location>
        <position position="162"/>
    </location>
</feature>
<feature type="modified residue" description="Allysine" evidence="14">
    <location>
        <position position="170"/>
    </location>
</feature>
<feature type="modified residue" description="Phosphoserine" evidence="3">
    <location>
        <position position="171"/>
    </location>
</feature>
<feature type="modified residue" description="4-hydroxyproline" evidence="4">
    <location>
        <position position="189"/>
    </location>
</feature>
<feature type="modified residue" description="4-hydroxyproline" evidence="4">
    <location>
        <position position="192"/>
    </location>
</feature>
<feature type="modified residue" description="4-hydroxyproline" evidence="4">
    <location>
        <position position="195"/>
    </location>
</feature>
<feature type="modified residue" description="4-hydroxyproline" evidence="4">
    <location>
        <position position="204"/>
    </location>
</feature>
<feature type="modified residue" description="4-hydroxyproline" evidence="4">
    <location>
        <position position="207"/>
    </location>
</feature>
<feature type="modified residue" description="4-hydroxyproline" evidence="4">
    <location>
        <position position="210"/>
    </location>
</feature>
<feature type="modified residue" description="4-hydroxyproline" evidence="4">
    <location>
        <position position="225"/>
    </location>
</feature>
<feature type="modified residue" description="4-hydroxyproline" evidence="4">
    <location>
        <position position="240"/>
    </location>
</feature>
<feature type="modified residue" description="4-hydroxyproline" evidence="4">
    <location>
        <position position="246"/>
    </location>
</feature>
<feature type="modified residue" description="4-hydroxyproline" evidence="4">
    <location>
        <position position="255"/>
    </location>
</feature>
<feature type="modified residue" description="4-hydroxyproline" evidence="4">
    <location>
        <position position="261"/>
    </location>
</feature>
<feature type="modified residue" description="5-hydroxylysine; alternate" evidence="10">
    <location>
        <position position="264"/>
    </location>
</feature>
<feature type="modified residue" description="Phosphoserine" evidence="3">
    <location>
        <position position="270"/>
    </location>
</feature>
<feature type="modified residue" description="5-hydroxylysine" evidence="6">
    <location>
        <position position="276"/>
    </location>
</feature>
<feature type="modified residue" description="5-hydroxylysine" evidence="6">
    <location>
        <position position="285"/>
    </location>
</feature>
<feature type="modified residue" description="4-hydroxyproline" evidence="4">
    <location>
        <position position="288"/>
    </location>
</feature>
<feature type="modified residue" description="4-hydroxyproline" evidence="4">
    <location>
        <position position="291"/>
    </location>
</feature>
<feature type="modified residue" description="4-hydroxyproline" evidence="4">
    <location>
        <position position="297"/>
    </location>
</feature>
<feature type="modified residue" description="4-hydroxyproline" evidence="4">
    <location>
        <position position="306"/>
    </location>
</feature>
<feature type="modified residue" description="4-hydroxyproline" evidence="4">
    <location>
        <position position="312"/>
    </location>
</feature>
<feature type="modified residue" description="4-hydroxyproline" evidence="4">
    <location>
        <position position="333"/>
    </location>
</feature>
<feature type="modified residue" description="4-hydroxyproline" evidence="4">
    <location>
        <position position="342"/>
    </location>
</feature>
<feature type="modified residue" description="4-hydroxyproline" evidence="4">
    <location>
        <position position="345"/>
    </location>
</feature>
<feature type="modified residue" description="4-hydroxyproline" evidence="4">
    <location>
        <position position="372"/>
    </location>
</feature>
<feature type="modified residue" description="4-hydroxyproline" evidence="4">
    <location>
        <position position="375"/>
    </location>
</feature>
<feature type="modified residue" description="4-hydroxyproline" evidence="4">
    <location>
        <position position="387"/>
    </location>
</feature>
<feature type="modified residue" description="4-hydroxyproline" evidence="4">
    <location>
        <position position="393"/>
    </location>
</feature>
<feature type="modified residue" description="4-hydroxyproline" evidence="4">
    <location>
        <position position="402"/>
    </location>
</feature>
<feature type="modified residue" description="4-hydroxyproline" evidence="4">
    <location>
        <position position="408"/>
    </location>
</feature>
<feature type="modified residue" description="4-hydroxyproline" evidence="4">
    <location>
        <position position="411"/>
    </location>
</feature>
<feature type="modified residue" description="4-hydroxyproline" evidence="4">
    <location>
        <position position="426"/>
    </location>
</feature>
<feature type="modified residue" description="5-hydroxylysine" evidence="4">
    <location>
        <position position="429"/>
    </location>
</feature>
<feature type="modified residue" description="4-hydroxyproline" evidence="4">
    <location>
        <position position="435"/>
    </location>
</feature>
<feature type="modified residue" description="4-hydroxyproline" evidence="4">
    <location>
        <position position="438"/>
    </location>
</feature>
<feature type="modified residue" description="4-hydroxyproline" evidence="4">
    <location>
        <position position="450"/>
    </location>
</feature>
<feature type="modified residue" description="4-hydroxyproline" evidence="4">
    <location>
        <position position="459"/>
    </location>
</feature>
<feature type="modified residue" description="4-hydroxyproline" evidence="4">
    <location>
        <position position="474"/>
    </location>
</feature>
<feature type="modified residue" description="4-hydroxyproline" evidence="4">
    <location>
        <position position="480"/>
    </location>
</feature>
<feature type="modified residue" description="4-hydroxyproline" evidence="4">
    <location>
        <position position="489"/>
    </location>
</feature>
<feature type="modified residue" description="4-hydroxyproline" evidence="4">
    <location>
        <position position="495"/>
    </location>
</feature>
<feature type="modified residue" description="5-hydroxylysine" evidence="4">
    <location>
        <position position="504"/>
    </location>
</feature>
<feature type="modified residue" description="4-hydroxyproline" evidence="4">
    <location>
        <position position="513"/>
    </location>
</feature>
<feature type="modified residue" description="4-hydroxyproline" evidence="4">
    <location>
        <position position="522"/>
    </location>
</feature>
<feature type="modified residue" description="4-hydroxyproline" evidence="4">
    <location>
        <position position="528"/>
    </location>
</feature>
<feature type="modified residue" description="4-hydroxyproline" evidence="4">
    <location>
        <position position="534"/>
    </location>
</feature>
<feature type="modified residue" description="4-hydroxyproline" evidence="4">
    <location>
        <position position="543"/>
    </location>
</feature>
<feature type="modified residue" description="4-hydroxyproline" evidence="4">
    <location>
        <position position="546"/>
    </location>
</feature>
<feature type="modified residue" description="4-hydroxyproline" evidence="4">
    <location>
        <position position="555"/>
    </location>
</feature>
<feature type="modified residue" description="4-hydroxyproline" evidence="4">
    <location>
        <position position="564"/>
    </location>
</feature>
<feature type="modified residue" description="4-hydroxyproline" evidence="4">
    <location>
        <position position="570"/>
    </location>
</feature>
<feature type="modified residue" description="4-hydroxyproline" evidence="4">
    <location>
        <position position="582"/>
    </location>
</feature>
<feature type="modified residue" description="4-hydroxyproline" evidence="4">
    <location>
        <position position="591"/>
    </location>
</feature>
<feature type="modified residue" description="4-hydroxyproline" evidence="4">
    <location>
        <position position="600"/>
    </location>
</feature>
<feature type="modified residue" description="4-hydroxyproline" evidence="4">
    <location>
        <position position="603"/>
    </location>
</feature>
<feature type="modified residue" description="4-hydroxyproline" evidence="4">
    <location>
        <position position="621"/>
    </location>
</feature>
<feature type="modified residue" description="4-hydroxyproline" evidence="4">
    <location>
        <position position="639"/>
    </location>
</feature>
<feature type="modified residue" description="4-hydroxyproline" evidence="4">
    <location>
        <position position="645"/>
    </location>
</feature>
<feature type="modified residue" description="4-hydroxyproline" evidence="4">
    <location>
        <position position="651"/>
    </location>
</feature>
<feature type="modified residue" description="4-hydroxyproline" evidence="4">
    <location>
        <position position="657"/>
    </location>
</feature>
<feature type="modified residue" description="4-hydroxyproline" evidence="4">
    <location>
        <position position="663"/>
    </location>
</feature>
<feature type="modified residue" description="4-hydroxyproline" evidence="4">
    <location>
        <position position="669"/>
    </location>
</feature>
<feature type="modified residue" description="4-hydroxyproline" evidence="4">
    <location>
        <position position="681"/>
    </location>
</feature>
<feature type="modified residue" description="4-hydroxyproline" evidence="4">
    <location>
        <position position="690"/>
    </location>
</feature>
<feature type="modified residue" description="4-hydroxyproline" evidence="4">
    <location>
        <position position="702"/>
    </location>
</feature>
<feature type="modified residue" description="4-hydroxyproline" evidence="4">
    <location>
        <position position="714"/>
    </location>
</feature>
<feature type="modified residue" description="4-hydroxyproline" evidence="4">
    <location>
        <position position="717"/>
    </location>
</feature>
<feature type="modified residue" description="4-hydroxyproline" evidence="4">
    <location>
        <position position="723"/>
    </location>
</feature>
<feature type="modified residue" description="4-hydroxyproline" evidence="4">
    <location>
        <position position="729"/>
    </location>
</feature>
<feature type="modified residue" description="4-hydroxyproline" evidence="4">
    <location>
        <position position="738"/>
    </location>
</feature>
<feature type="modified residue" description="5-hydroxylysine" evidence="4">
    <location>
        <position position="750"/>
    </location>
</feature>
<feature type="modified residue" description="4-hydroxyproline" evidence="4">
    <location>
        <position position="756"/>
    </location>
</feature>
<feature type="modified residue" description="4-hydroxyproline" evidence="4">
    <location>
        <position position="771"/>
    </location>
</feature>
<feature type="modified residue" description="4-hydroxyproline" evidence="4">
    <location>
        <position position="777"/>
    </location>
</feature>
<feature type="modified residue" description="Phosphoserine" evidence="3">
    <location>
        <position position="786"/>
    </location>
</feature>
<feature type="modified residue" description="4-hydroxyproline" evidence="4">
    <location>
        <position position="798"/>
    </location>
</feature>
<feature type="modified residue" description="4-hydroxyproline" evidence="4">
    <location>
        <position position="804"/>
    </location>
</feature>
<feature type="modified residue" description="4-hydroxyproline" evidence="4">
    <location>
        <position position="807"/>
    </location>
</feature>
<feature type="modified residue" description="4-hydroxyproline" evidence="4">
    <location>
        <position position="816"/>
    </location>
</feature>
<feature type="modified residue" description="4-hydroxyproline" evidence="4">
    <location>
        <position position="822"/>
    </location>
</feature>
<feature type="modified residue" description="4-hydroxyproline" evidence="4">
    <location>
        <position position="840"/>
    </location>
</feature>
<feature type="modified residue" description="4-hydroxyproline" evidence="4">
    <location>
        <position position="849"/>
    </location>
</feature>
<feature type="modified residue" description="4-hydroxyproline" evidence="4">
    <location>
        <position position="858"/>
    </location>
</feature>
<feature type="modified residue" description="5-hydroxylysine" evidence="4">
    <location>
        <position position="861"/>
    </location>
</feature>
<feature type="modified residue" description="4-hydroxyproline" evidence="4">
    <location>
        <position position="870"/>
    </location>
</feature>
<feature type="modified residue" description="4-hydroxyproline" evidence="4">
    <location>
        <position position="876"/>
    </location>
</feature>
<feature type="modified residue" description="3-hydroxyproline" evidence="5">
    <location>
        <position position="884"/>
    </location>
</feature>
<feature type="modified residue" description="4-hydroxyproline" evidence="5">
    <location>
        <position position="885"/>
    </location>
</feature>
<feature type="modified residue" description="4-hydroxyproline" evidence="5">
    <location>
        <position position="894"/>
    </location>
</feature>
<feature type="modified residue" description="4-hydroxyproline" evidence="5">
    <location>
        <position position="897"/>
    </location>
</feature>
<feature type="modified residue" description="4-hydroxyproline" evidence="4">
    <location>
        <position position="918"/>
    </location>
</feature>
<feature type="modified residue" description="4-hydroxyproline" evidence="4">
    <location>
        <position position="927"/>
    </location>
</feature>
<feature type="modified residue" description="4-hydroxyproline" evidence="4">
    <location>
        <position position="936"/>
    </location>
</feature>
<feature type="modified residue" description="4-hydroxyproline" evidence="4">
    <location>
        <position position="945"/>
    </location>
</feature>
<feature type="modified residue" description="4-hydroxyproline" evidence="4">
    <location>
        <position position="963"/>
    </location>
</feature>
<feature type="modified residue" description="4-hydroxyproline" evidence="4">
    <location>
        <position position="972"/>
    </location>
</feature>
<feature type="modified residue" description="4-hydroxyproline" evidence="4">
    <location>
        <position position="975"/>
    </location>
</feature>
<feature type="modified residue" description="4-hydroxyproline" evidence="4">
    <location>
        <position position="981"/>
    </location>
</feature>
<feature type="modified residue" description="4-hydroxyproline" evidence="4">
    <location>
        <position position="996"/>
    </location>
</feature>
<feature type="modified residue" description="4-hydroxyproline" evidence="4">
    <location>
        <position position="1002"/>
    </location>
</feature>
<feature type="modified residue" description="4-hydroxyproline" evidence="4">
    <location>
        <position position="1008"/>
    </location>
</feature>
<feature type="modified residue" description="4-hydroxyproline" evidence="4">
    <location>
        <position position="1017"/>
    </location>
</feature>
<feature type="modified residue" description="4-hydroxyproline" evidence="4">
    <location>
        <position position="1023"/>
    </location>
</feature>
<feature type="modified residue" description="5-hydroxylysine" evidence="4">
    <location>
        <position position="1032"/>
    </location>
</feature>
<feature type="modified residue" description="4-hydroxyproline" evidence="4">
    <location>
        <position position="1044"/>
    </location>
</feature>
<feature type="modified residue" description="4-hydroxyproline" evidence="4">
    <location>
        <position position="1047"/>
    </location>
</feature>
<feature type="modified residue" description="4-hydroxyproline" evidence="4">
    <location>
        <position position="1050"/>
    </location>
</feature>
<feature type="modified residue" description="5-hydroxylysine" evidence="4">
    <location>
        <position position="1095"/>
    </location>
</feature>
<feature type="modified residue" description="5-hydroxylysine; alternate" evidence="4">
    <location>
        <position position="1107"/>
    </location>
</feature>
<feature type="modified residue" description="4-hydroxyproline" evidence="4">
    <location>
        <position position="1119"/>
    </location>
</feature>
<feature type="modified residue" description="4-hydroxyproline" evidence="4">
    <location>
        <position position="1122"/>
    </location>
</feature>
<feature type="modified residue" description="4-hydroxyproline" evidence="4">
    <location>
        <position position="1125"/>
    </location>
</feature>
<feature type="modified residue" description="4-hydroxyproline" evidence="4">
    <location>
        <position position="1143"/>
    </location>
</feature>
<feature type="modified residue" description="4-hydroxyproline" evidence="5">
    <location>
        <position position="1158"/>
    </location>
</feature>
<feature type="modified residue" description="3-hydroxyproline" evidence="11">
    <location>
        <position position="1163"/>
    </location>
</feature>
<feature type="modified residue" description="4-hydroxyproline" evidence="5">
    <location>
        <position position="1164"/>
    </location>
</feature>
<feature type="modified residue" description="3-hydroxyproline" evidence="12">
    <location>
        <position position="1178"/>
    </location>
</feature>
<feature type="modified residue" description="4-hydroxyproline" evidence="12">
    <location>
        <position position="1179"/>
    </location>
</feature>
<feature type="modified residue" description="3-hydroxyproline" evidence="12">
    <location>
        <position position="1181"/>
    </location>
</feature>
<feature type="modified residue" description="4-hydroxyproline" evidence="12">
    <location>
        <position position="1182"/>
    </location>
</feature>
<feature type="modified residue" description="3-hydroxyproline" evidence="5">
    <location>
        <position position="1184"/>
    </location>
</feature>
<feature type="modified residue" description="4-hydroxyproline" evidence="12">
    <location>
        <position position="1185"/>
    </location>
</feature>
<feature type="modified residue" description="4-hydroxyproline" evidence="12">
    <location>
        <position position="1188"/>
    </location>
</feature>
<feature type="modified residue" description="4-hydroxyproline" evidence="5">
    <location>
        <position position="1191"/>
    </location>
</feature>
<feature type="modified residue" description="Allysine" evidence="11">
    <location>
        <position position="1207"/>
    </location>
</feature>
<feature type="glycosylation site" description="O-linked (Gal...) hydroxylysine; alternate" evidence="4">
    <location>
        <position position="264"/>
    </location>
</feature>
<feature type="glycosylation site" description="O-linked (Gal...) hydroxylysine; alternate" evidence="4">
    <location>
        <position position="1107"/>
    </location>
</feature>
<feature type="disulfide bond" evidence="8">
    <location>
        <begin position="1258"/>
        <end position="1290"/>
    </location>
</feature>
<feature type="disulfide bond" description="Interchain (with C-1281)" evidence="8">
    <location>
        <position position="1264"/>
    </location>
</feature>
<feature type="disulfide bond" description="Interchain (with C-1264)" evidence="8">
    <location>
        <position position="1281"/>
    </location>
</feature>
<feature type="disulfide bond" evidence="8">
    <location>
        <begin position="1298"/>
        <end position="1461"/>
    </location>
</feature>
<feature type="disulfide bond" evidence="8">
    <location>
        <begin position="1369"/>
        <end position="1414"/>
    </location>
</feature>
<feature type="sequence conflict" description="In Ref. 4; AA sequence." evidence="15" ref="4">
    <original>Q</original>
    <variation>E</variation>
    <location>
        <position position="687"/>
    </location>
</feature>
<feature type="sequence conflict" description="In Ref. 5; AA sequence." evidence="15" ref="5">
    <location>
        <begin position="790"/>
        <end position="792"/>
    </location>
</feature>
<feature type="sequence conflict" description="In Ref. 5; AA sequence." evidence="15" ref="5">
    <original>A</original>
    <variation>T</variation>
    <location>
        <position position="794"/>
    </location>
</feature>
<feature type="sequence conflict" description="In Ref. 6; AA sequence." evidence="15" ref="6">
    <original>P</original>
    <variation>A</variation>
    <location>
        <position position="1043"/>
    </location>
</feature>
<feature type="sequence conflict" description="In Ref. 6; AA sequence." evidence="15" ref="6">
    <original>A</original>
    <variation>P</variation>
    <location>
        <position position="1046"/>
    </location>
</feature>
<feature type="sequence conflict" description="In Ref. 6; AA sequence." evidence="15" ref="6">
    <original>A</original>
    <variation>I</variation>
    <location>
        <position position="1074"/>
    </location>
</feature>
<feature type="sequence conflict" description="In Ref. 6; AA sequence." evidence="15" ref="6">
    <original>I</original>
    <variation>V</variation>
    <location>
        <position position="1077"/>
    </location>
</feature>
<feature type="sequence conflict" description="In Ref. 6; AA sequence." evidence="15" ref="6">
    <original>V</original>
    <variation>A</variation>
    <location>
        <position position="1080"/>
    </location>
</feature>
<feature type="sequence conflict" description="In Ref. 8; AA sequence." evidence="15" ref="8">
    <original>E</original>
    <variation>QZ</variation>
    <location>
        <position position="1206"/>
    </location>
</feature>
<evidence type="ECO:0000250" key="1"/>
<evidence type="ECO:0000250" key="2">
    <source>
        <dbReference type="UniProtKB" id="P02452"/>
    </source>
</evidence>
<evidence type="ECO:0000250" key="3">
    <source>
        <dbReference type="UniProtKB" id="P02454"/>
    </source>
</evidence>
<evidence type="ECO:0000250" key="4">
    <source>
        <dbReference type="UniProtKB" id="P02457"/>
    </source>
</evidence>
<evidence type="ECO:0000250" key="5">
    <source>
        <dbReference type="UniProtKB" id="P11087"/>
    </source>
</evidence>
<evidence type="ECO:0000255" key="6"/>
<evidence type="ECO:0000255" key="7">
    <source>
        <dbReference type="PROSITE-ProRule" id="PRU00220"/>
    </source>
</evidence>
<evidence type="ECO:0000255" key="8">
    <source>
        <dbReference type="PROSITE-ProRule" id="PRU00793"/>
    </source>
</evidence>
<evidence type="ECO:0000256" key="9">
    <source>
        <dbReference type="SAM" id="MobiDB-lite"/>
    </source>
</evidence>
<evidence type="ECO:0000269" key="10">
    <source>
    </source>
</evidence>
<evidence type="ECO:0000269" key="11">
    <source>
    </source>
</evidence>
<evidence type="ECO:0000269" key="12">
    <source>
    </source>
</evidence>
<evidence type="ECO:0000269" key="13">
    <source>
    </source>
</evidence>
<evidence type="ECO:0000269" key="14">
    <source>
    </source>
</evidence>
<evidence type="ECO:0000305" key="15"/>
<evidence type="ECO:0000305" key="16">
    <source>
    </source>
</evidence>